<reference key="1">
    <citation type="journal article" date="2010" name="BMC Genomics">
        <title>Comparative venom gland transcriptome analysis of the scorpion Lychas mucronatus reveals intraspecific toxic gene diversity and new venomous components.</title>
        <authorList>
            <person name="Zhao R."/>
            <person name="Ma Y."/>
            <person name="He Y."/>
            <person name="Di Z."/>
            <person name="Wu Y.-L."/>
            <person name="Cao Z.-J."/>
            <person name="Li W.-X."/>
        </authorList>
    </citation>
    <scope>NUCLEOTIDE SEQUENCE [MRNA]</scope>
    <source>
        <strain>Yunnan</strain>
        <tissue>Venom gland</tissue>
    </source>
</reference>
<keyword id="KW-1015">Disulfide bond</keyword>
<keyword id="KW-0528">Neurotoxin</keyword>
<keyword id="KW-0964">Secreted</keyword>
<keyword id="KW-0732">Signal</keyword>
<keyword id="KW-0800">Toxin</keyword>
<protein>
    <recommendedName>
        <fullName>Neurotoxin 60.35</fullName>
    </recommendedName>
</protein>
<organism>
    <name type="scientific">Lychas mucronatus</name>
    <name type="common">Chinese swimming scorpion</name>
    <dbReference type="NCBI Taxonomy" id="172552"/>
    <lineage>
        <taxon>Eukaryota</taxon>
        <taxon>Metazoa</taxon>
        <taxon>Ecdysozoa</taxon>
        <taxon>Arthropoda</taxon>
        <taxon>Chelicerata</taxon>
        <taxon>Arachnida</taxon>
        <taxon>Scorpiones</taxon>
        <taxon>Buthida</taxon>
        <taxon>Buthoidea</taxon>
        <taxon>Buthidae</taxon>
        <taxon>Lychas</taxon>
    </lineage>
</organism>
<evidence type="ECO:0000250" key="1"/>
<evidence type="ECO:0000255" key="2"/>
<evidence type="ECO:0000255" key="3">
    <source>
        <dbReference type="PROSITE-ProRule" id="PRU01210"/>
    </source>
</evidence>
<evidence type="ECO:0000305" key="4"/>
<dbReference type="EMBL" id="GT028960">
    <property type="status" value="NOT_ANNOTATED_CDS"/>
    <property type="molecule type" value="mRNA"/>
</dbReference>
<dbReference type="SMR" id="P0CJ00"/>
<dbReference type="GO" id="GO:0005576">
    <property type="term" value="C:extracellular region"/>
    <property type="evidence" value="ECO:0007669"/>
    <property type="project" value="UniProtKB-SubCell"/>
</dbReference>
<dbReference type="GO" id="GO:0019871">
    <property type="term" value="F:sodium channel inhibitor activity"/>
    <property type="evidence" value="ECO:0007669"/>
    <property type="project" value="InterPro"/>
</dbReference>
<dbReference type="GO" id="GO:0090729">
    <property type="term" value="F:toxin activity"/>
    <property type="evidence" value="ECO:0007669"/>
    <property type="project" value="UniProtKB-KW"/>
</dbReference>
<dbReference type="CDD" id="cd23106">
    <property type="entry name" value="neurotoxins_LC_scorpion"/>
    <property type="match status" value="1"/>
</dbReference>
<dbReference type="Gene3D" id="3.30.30.10">
    <property type="entry name" value="Knottin, scorpion toxin-like"/>
    <property type="match status" value="1"/>
</dbReference>
<dbReference type="InterPro" id="IPR044062">
    <property type="entry name" value="LCN-type_CS_alpha_beta_dom"/>
</dbReference>
<dbReference type="InterPro" id="IPR036574">
    <property type="entry name" value="Scorpion_toxin-like_sf"/>
</dbReference>
<dbReference type="InterPro" id="IPR002061">
    <property type="entry name" value="Scorpion_toxinL/defensin"/>
</dbReference>
<dbReference type="Pfam" id="PF00537">
    <property type="entry name" value="Toxin_3"/>
    <property type="match status" value="1"/>
</dbReference>
<dbReference type="SUPFAM" id="SSF57095">
    <property type="entry name" value="Scorpion toxin-like"/>
    <property type="match status" value="1"/>
</dbReference>
<dbReference type="PROSITE" id="PS51863">
    <property type="entry name" value="LCN_CSAB"/>
    <property type="match status" value="1"/>
</dbReference>
<sequence length="85" mass="9480">MKFCVAVSLLIIASMAGVISVSGYDVYPRDYAGNYYYCGVRKDPDCSKVCKLHGATVGYCHVKRCSCVDLPEKNQNFLSVIWKQC</sequence>
<comment type="subcellular location">
    <subcellularLocation>
        <location evidence="1">Secreted</location>
    </subcellularLocation>
</comment>
<comment type="tissue specificity">
    <text>Expressed by the venom gland.</text>
</comment>
<comment type="domain">
    <text evidence="4">Has the structural arrangement of an alpha-helix connected to antiparallel beta-sheets by disulfide bonds (CS-alpha/beta).</text>
</comment>
<comment type="similarity">
    <text>Belongs to the long (3 C-C) scorpion toxin superfamily.</text>
</comment>
<accession>P0CJ00</accession>
<proteinExistence type="evidence at transcript level"/>
<feature type="signal peptide" evidence="2">
    <location>
        <begin position="1"/>
        <end position="23"/>
    </location>
</feature>
<feature type="chain" id="PRO_0000403891" description="Neurotoxin 60.35">
    <location>
        <begin position="24"/>
        <end position="85"/>
    </location>
</feature>
<feature type="domain" description="LCN-type CS-alpha/beta" evidence="3">
    <location>
        <begin position="24"/>
        <end position="85"/>
    </location>
</feature>
<feature type="disulfide bond" evidence="3">
    <location>
        <begin position="38"/>
        <end position="60"/>
    </location>
</feature>
<feature type="disulfide bond" evidence="3">
    <location>
        <begin position="46"/>
        <end position="65"/>
    </location>
</feature>
<feature type="disulfide bond" evidence="3">
    <location>
        <begin position="50"/>
        <end position="67"/>
    </location>
</feature>
<name>STX60_LYCMC</name>